<name>BAME_METMM</name>
<proteinExistence type="inferred from homology"/>
<organism>
    <name type="scientific">Methylomonas methanica (strain DSM 25384 / MC09)</name>
    <dbReference type="NCBI Taxonomy" id="857087"/>
    <lineage>
        <taxon>Bacteria</taxon>
        <taxon>Pseudomonadati</taxon>
        <taxon>Pseudomonadota</taxon>
        <taxon>Gammaproteobacteria</taxon>
        <taxon>Methylococcales</taxon>
        <taxon>Methylococcaceae</taxon>
        <taxon>Methylomonas</taxon>
    </lineage>
</organism>
<protein>
    <recommendedName>
        <fullName evidence="1">Outer membrane protein assembly factor BamE</fullName>
    </recommendedName>
</protein>
<reference key="1">
    <citation type="submission" date="2011-05" db="EMBL/GenBank/DDBJ databases">
        <title>Complete sequence of Methylomonas methanica MC09.</title>
        <authorList>
            <person name="Lucas S."/>
            <person name="Han J."/>
            <person name="Lapidus A."/>
            <person name="Cheng J.-F."/>
            <person name="Goodwin L."/>
            <person name="Pitluck S."/>
            <person name="Peters L."/>
            <person name="Mikhailova N."/>
            <person name="Teshima H."/>
            <person name="Han C."/>
            <person name="Tapia R."/>
            <person name="Land M."/>
            <person name="Hauser L."/>
            <person name="Kyrpides N."/>
            <person name="Ivanova N."/>
            <person name="Pagani I."/>
            <person name="Stein L."/>
            <person name="Woyke T."/>
        </authorList>
    </citation>
    <scope>NUCLEOTIDE SEQUENCE [LARGE SCALE GENOMIC DNA]</scope>
    <source>
        <strain>DSM 25384 / MC09</strain>
    </source>
</reference>
<evidence type="ECO:0000255" key="1">
    <source>
        <dbReference type="HAMAP-Rule" id="MF_00925"/>
    </source>
</evidence>
<evidence type="ECO:0000256" key="2">
    <source>
        <dbReference type="SAM" id="MobiDB-lite"/>
    </source>
</evidence>
<accession>G0A7H1</accession>
<comment type="function">
    <text evidence="1">Part of the outer membrane protein assembly complex, which is involved in assembly and insertion of beta-barrel proteins into the outer membrane.</text>
</comment>
<comment type="subunit">
    <text evidence="1">Part of the Bam complex.</text>
</comment>
<comment type="subcellular location">
    <subcellularLocation>
        <location evidence="1">Cell outer membrane</location>
        <topology evidence="1">Lipid-anchor</topology>
    </subcellularLocation>
</comment>
<comment type="similarity">
    <text evidence="1">Belongs to the BamE family.</text>
</comment>
<keyword id="KW-0998">Cell outer membrane</keyword>
<keyword id="KW-0449">Lipoprotein</keyword>
<keyword id="KW-0472">Membrane</keyword>
<keyword id="KW-0564">Palmitate</keyword>
<keyword id="KW-1185">Reference proteome</keyword>
<keyword id="KW-0732">Signal</keyword>
<dbReference type="EMBL" id="CP002738">
    <property type="protein sequence ID" value="AEG00641.1"/>
    <property type="molecule type" value="Genomic_DNA"/>
</dbReference>
<dbReference type="RefSeq" id="WP_013818882.1">
    <property type="nucleotide sequence ID" value="NC_015572.1"/>
</dbReference>
<dbReference type="SMR" id="G0A7H1"/>
<dbReference type="STRING" id="857087.Metme_2237"/>
<dbReference type="KEGG" id="mmt:Metme_2237"/>
<dbReference type="eggNOG" id="COG2913">
    <property type="taxonomic scope" value="Bacteria"/>
</dbReference>
<dbReference type="HOGENOM" id="CLU_083835_3_2_6"/>
<dbReference type="OrthoDB" id="9808250at2"/>
<dbReference type="Proteomes" id="UP000008888">
    <property type="component" value="Chromosome"/>
</dbReference>
<dbReference type="GO" id="GO:1990063">
    <property type="term" value="C:Bam protein complex"/>
    <property type="evidence" value="ECO:0007669"/>
    <property type="project" value="TreeGrafter"/>
</dbReference>
<dbReference type="GO" id="GO:0030674">
    <property type="term" value="F:protein-macromolecule adaptor activity"/>
    <property type="evidence" value="ECO:0007669"/>
    <property type="project" value="TreeGrafter"/>
</dbReference>
<dbReference type="GO" id="GO:0043165">
    <property type="term" value="P:Gram-negative-bacterium-type cell outer membrane assembly"/>
    <property type="evidence" value="ECO:0007669"/>
    <property type="project" value="UniProtKB-UniRule"/>
</dbReference>
<dbReference type="GO" id="GO:0051205">
    <property type="term" value="P:protein insertion into membrane"/>
    <property type="evidence" value="ECO:0007669"/>
    <property type="project" value="UniProtKB-UniRule"/>
</dbReference>
<dbReference type="Gene3D" id="3.30.1450.10">
    <property type="match status" value="1"/>
</dbReference>
<dbReference type="HAMAP" id="MF_00925">
    <property type="entry name" value="OM_assembly_BamE"/>
    <property type="match status" value="1"/>
</dbReference>
<dbReference type="InterPro" id="IPR026592">
    <property type="entry name" value="BamE"/>
</dbReference>
<dbReference type="InterPro" id="IPR037873">
    <property type="entry name" value="BamE-like"/>
</dbReference>
<dbReference type="InterPro" id="IPR007450">
    <property type="entry name" value="BamE_dom"/>
</dbReference>
<dbReference type="PANTHER" id="PTHR37482">
    <property type="entry name" value="OUTER MEMBRANE PROTEIN ASSEMBLY FACTOR BAME"/>
    <property type="match status" value="1"/>
</dbReference>
<dbReference type="PANTHER" id="PTHR37482:SF1">
    <property type="entry name" value="OUTER MEMBRANE PROTEIN ASSEMBLY FACTOR BAME"/>
    <property type="match status" value="1"/>
</dbReference>
<dbReference type="Pfam" id="PF04355">
    <property type="entry name" value="BamE"/>
    <property type="match status" value="1"/>
</dbReference>
<dbReference type="PROSITE" id="PS51257">
    <property type="entry name" value="PROKAR_LIPOPROTEIN"/>
    <property type="match status" value="1"/>
</dbReference>
<sequence>MKRTVFPLAVAAALTLTACETILNNLPGVYSIDIEQGNMIDQAMVDQLRPNMSKRQVLYIMGSPMLTDTFHERRWDYLYSDQPGGEARVQKRISLFFDGDNLIGVQGDFRPSKLPVIKESTETTVDVPKRNLDKTMWEKITGLFSNDDSGEMPVKPESKPSDLLNE</sequence>
<feature type="signal peptide" evidence="1">
    <location>
        <begin position="1"/>
        <end position="18"/>
    </location>
</feature>
<feature type="chain" id="PRO_5000774753" description="Outer membrane protein assembly factor BamE">
    <location>
        <begin position="19"/>
        <end position="166"/>
    </location>
</feature>
<feature type="region of interest" description="Disordered" evidence="2">
    <location>
        <begin position="143"/>
        <end position="166"/>
    </location>
</feature>
<feature type="lipid moiety-binding region" description="N-palmitoyl cysteine" evidence="1">
    <location>
        <position position="19"/>
    </location>
</feature>
<feature type="lipid moiety-binding region" description="S-diacylglycerol cysteine" evidence="1">
    <location>
        <position position="19"/>
    </location>
</feature>
<gene>
    <name evidence="1" type="primary">bamE</name>
    <name type="ordered locus">Metme_2237</name>
</gene>